<feature type="signal peptide" evidence="1">
    <location>
        <begin position="1"/>
        <end position="20"/>
    </location>
</feature>
<feature type="propeptide" id="PRO_0000028742" description="Activation peptide" evidence="1">
    <location>
        <begin position="21"/>
        <end position="97"/>
    </location>
</feature>
<feature type="chain" id="PRO_0000028743" description="Matrilysin">
    <location>
        <begin position="98"/>
        <end position="267"/>
    </location>
</feature>
<feature type="short sequence motif" description="Cysteine switch" evidence="1">
    <location>
        <begin position="88"/>
        <end position="95"/>
    </location>
</feature>
<feature type="active site" evidence="2">
    <location>
        <position position="218"/>
    </location>
</feature>
<feature type="binding site" description="in inhibited form" evidence="1">
    <location>
        <position position="90"/>
    </location>
    <ligand>
        <name>Zn(2+)</name>
        <dbReference type="ChEBI" id="CHEBI:29105"/>
        <label>2</label>
        <note>catalytic</note>
    </ligand>
</feature>
<feature type="binding site" evidence="1">
    <location>
        <position position="156"/>
    </location>
    <ligand>
        <name>Ca(2+)</name>
        <dbReference type="ChEBI" id="CHEBI:29108"/>
        <label>1</label>
    </ligand>
</feature>
<feature type="binding site" evidence="1">
    <location>
        <position position="166"/>
    </location>
    <ligand>
        <name>Zn(2+)</name>
        <dbReference type="ChEBI" id="CHEBI:29105"/>
        <label>1</label>
    </ligand>
</feature>
<feature type="binding site" evidence="1">
    <location>
        <position position="168"/>
    </location>
    <ligand>
        <name>Zn(2+)</name>
        <dbReference type="ChEBI" id="CHEBI:29105"/>
        <label>1</label>
    </ligand>
</feature>
<feature type="binding site" evidence="1">
    <location>
        <position position="173"/>
    </location>
    <ligand>
        <name>Ca(2+)</name>
        <dbReference type="ChEBI" id="CHEBI:29108"/>
        <label>2</label>
    </ligand>
</feature>
<feature type="binding site" evidence="1">
    <location>
        <position position="174"/>
    </location>
    <ligand>
        <name>Ca(2+)</name>
        <dbReference type="ChEBI" id="CHEBI:29108"/>
        <label>2</label>
    </ligand>
</feature>
<feature type="binding site" evidence="1">
    <location>
        <position position="176"/>
    </location>
    <ligand>
        <name>Ca(2+)</name>
        <dbReference type="ChEBI" id="CHEBI:29108"/>
        <label>2</label>
    </ligand>
</feature>
<feature type="binding site" evidence="1">
    <location>
        <position position="178"/>
    </location>
    <ligand>
        <name>Ca(2+)</name>
        <dbReference type="ChEBI" id="CHEBI:29108"/>
        <label>2</label>
    </ligand>
</feature>
<feature type="binding site" evidence="1">
    <location>
        <position position="181"/>
    </location>
    <ligand>
        <name>Zn(2+)</name>
        <dbReference type="ChEBI" id="CHEBI:29105"/>
        <label>1</label>
    </ligand>
</feature>
<feature type="binding site" evidence="1">
    <location>
        <position position="188"/>
    </location>
    <ligand>
        <name>Ca(2+)</name>
        <dbReference type="ChEBI" id="CHEBI:29108"/>
        <label>1</label>
    </ligand>
</feature>
<feature type="binding site" evidence="1">
    <location>
        <position position="190"/>
    </location>
    <ligand>
        <name>Ca(2+)</name>
        <dbReference type="ChEBI" id="CHEBI:29108"/>
        <label>1</label>
    </ligand>
</feature>
<feature type="binding site" evidence="1">
    <location>
        <position position="192"/>
    </location>
    <ligand>
        <name>Ca(2+)</name>
        <dbReference type="ChEBI" id="CHEBI:29108"/>
        <label>1</label>
    </ligand>
</feature>
<feature type="binding site" evidence="1">
    <location>
        <position position="194"/>
    </location>
    <ligand>
        <name>Zn(2+)</name>
        <dbReference type="ChEBI" id="CHEBI:29105"/>
        <label>1</label>
    </ligand>
</feature>
<feature type="binding site" evidence="1">
    <location>
        <position position="196"/>
    </location>
    <ligand>
        <name>Ca(2+)</name>
        <dbReference type="ChEBI" id="CHEBI:29108"/>
        <label>2</label>
    </ligand>
</feature>
<feature type="binding site" evidence="1">
    <location>
        <position position="199"/>
    </location>
    <ligand>
        <name>Ca(2+)</name>
        <dbReference type="ChEBI" id="CHEBI:29108"/>
        <label>2</label>
    </ligand>
</feature>
<feature type="binding site" evidence="1">
    <location>
        <position position="217"/>
    </location>
    <ligand>
        <name>Zn(2+)</name>
        <dbReference type="ChEBI" id="CHEBI:29105"/>
        <label>2</label>
        <note>catalytic</note>
    </ligand>
</feature>
<feature type="binding site" evidence="1">
    <location>
        <position position="221"/>
    </location>
    <ligand>
        <name>Zn(2+)</name>
        <dbReference type="ChEBI" id="CHEBI:29105"/>
        <label>2</label>
        <note>catalytic</note>
    </ligand>
</feature>
<feature type="binding site" evidence="1">
    <location>
        <position position="227"/>
    </location>
    <ligand>
        <name>Zn(2+)</name>
        <dbReference type="ChEBI" id="CHEBI:29105"/>
        <label>2</label>
        <note>catalytic</note>
    </ligand>
</feature>
<evidence type="ECO:0000250" key="1"/>
<evidence type="ECO:0000255" key="2">
    <source>
        <dbReference type="PROSITE-ProRule" id="PRU10095"/>
    </source>
</evidence>
<evidence type="ECO:0000305" key="3"/>
<gene>
    <name type="primary">Mmp7</name>
    <name type="synonym">Mmp-7</name>
</gene>
<comment type="function">
    <text evidence="1">Degrades casein, gelatins of types I, III, IV, and V, and fibronectin. Activates procollagenase (By similarity).</text>
</comment>
<comment type="catalytic activity">
    <reaction>
        <text>Cleavage of 14-Ala-|-Leu-15 and 16-Tyr-|-Leu-17 in B chain of insulin. No action on collagen types I, II, IV, V. Cleaves gelatin chain alpha2(I) &gt; alpha1(I).</text>
        <dbReference type="EC" id="3.4.24.23"/>
    </reaction>
</comment>
<comment type="cofactor">
    <cofactor evidence="1">
        <name>Ca(2+)</name>
        <dbReference type="ChEBI" id="CHEBI:29108"/>
    </cofactor>
    <text evidence="1">Binds 2 calcium ions per subunit.</text>
</comment>
<comment type="cofactor">
    <cofactor evidence="1">
        <name>Zn(2+)</name>
        <dbReference type="ChEBI" id="CHEBI:29105"/>
    </cofactor>
    <text evidence="1">Binds 2 Zn(2+) ions per subunit.</text>
</comment>
<comment type="subcellular location">
    <subcellularLocation>
        <location evidence="3">Secreted</location>
        <location evidence="3">Extracellular space</location>
        <location evidence="3">Extracellular matrix</location>
    </subcellularLocation>
</comment>
<comment type="domain">
    <text>The conserved cysteine present in the cysteine-switch motif binds the catalytic zinc ion, thus inhibiting the enzyme. The dissociation of the cysteine from the zinc ion upon the activation-peptide release activates the enzyme.</text>
</comment>
<comment type="similarity">
    <text evidence="3">Belongs to the peptidase M10A family.</text>
</comment>
<accession>P50280</accession>
<sequence>MAAMRLTLFRIVCLLPGCLALPLSQEAGEVTALQWEQAQNYLRKFYLHDSKTKKATSAVDKLREMQKFFGLPETGKLSPRVMEIMQKPRCGVPDVAEFSLMPNSPKWHSRTVTYRIVSYTTDLPRFLVDQIVKRALRMWSMQIPLNFKRVSWGTADIIIGFARGDHGDNFPFDGPGNTLGHAFAPGPGLGGDAHFDKDEYWTDGEDSGVNFLFVATHELGHSLGLGHSSVPSSVMYPTYQGDHSEDFSLTKDDIAGIQKLYGKRNKL</sequence>
<organism>
    <name type="scientific">Rattus norvegicus</name>
    <name type="common">Rat</name>
    <dbReference type="NCBI Taxonomy" id="10116"/>
    <lineage>
        <taxon>Eukaryota</taxon>
        <taxon>Metazoa</taxon>
        <taxon>Chordata</taxon>
        <taxon>Craniata</taxon>
        <taxon>Vertebrata</taxon>
        <taxon>Euteleostomi</taxon>
        <taxon>Mammalia</taxon>
        <taxon>Eutheria</taxon>
        <taxon>Euarchontoglires</taxon>
        <taxon>Glires</taxon>
        <taxon>Rodentia</taxon>
        <taxon>Myomorpha</taxon>
        <taxon>Muroidea</taxon>
        <taxon>Muridae</taxon>
        <taxon>Murinae</taxon>
        <taxon>Rattus</taxon>
    </lineage>
</organism>
<dbReference type="EC" id="3.4.24.23"/>
<dbReference type="EMBL" id="L24374">
    <property type="protein sequence ID" value="AAA99432.1"/>
    <property type="molecule type" value="mRNA"/>
</dbReference>
<dbReference type="EMBL" id="BC064657">
    <property type="protein sequence ID" value="AAH64657.1"/>
    <property type="molecule type" value="mRNA"/>
</dbReference>
<dbReference type="PIR" id="A57490">
    <property type="entry name" value="A57490"/>
</dbReference>
<dbReference type="RefSeq" id="NP_036996.1">
    <property type="nucleotide sequence ID" value="NM_012864.2"/>
</dbReference>
<dbReference type="SMR" id="P50280"/>
<dbReference type="FunCoup" id="P50280">
    <property type="interactions" value="172"/>
</dbReference>
<dbReference type="STRING" id="10116.ENSRNOP00000014041"/>
<dbReference type="MEROPS" id="M10.008"/>
<dbReference type="PhosphoSitePlus" id="P50280"/>
<dbReference type="PaxDb" id="10116-ENSRNOP00000014041"/>
<dbReference type="Ensembl" id="ENSRNOT00000014041.6">
    <property type="protein sequence ID" value="ENSRNOP00000014041.4"/>
    <property type="gene ID" value="ENSRNOG00000010507.6"/>
</dbReference>
<dbReference type="GeneID" id="25335"/>
<dbReference type="KEGG" id="rno:25335"/>
<dbReference type="UCSC" id="RGD:3100">
    <property type="organism name" value="rat"/>
</dbReference>
<dbReference type="AGR" id="RGD:3100"/>
<dbReference type="CTD" id="4316"/>
<dbReference type="RGD" id="3100">
    <property type="gene designation" value="Mmp7"/>
</dbReference>
<dbReference type="eggNOG" id="KOG1565">
    <property type="taxonomic scope" value="Eukaryota"/>
</dbReference>
<dbReference type="GeneTree" id="ENSGT00940000160903"/>
<dbReference type="HOGENOM" id="CLU_015489_4_1_1"/>
<dbReference type="InParanoid" id="P50280"/>
<dbReference type="OrthoDB" id="40014at9989"/>
<dbReference type="PhylomeDB" id="P50280"/>
<dbReference type="TreeFam" id="TF315428"/>
<dbReference type="BRENDA" id="3.4.24.23">
    <property type="organism ID" value="5301"/>
</dbReference>
<dbReference type="Reactome" id="R-RNO-1442490">
    <property type="pathway name" value="Collagen degradation"/>
</dbReference>
<dbReference type="Reactome" id="R-RNO-1474228">
    <property type="pathway name" value="Degradation of the extracellular matrix"/>
</dbReference>
<dbReference type="Reactome" id="R-RNO-1592389">
    <property type="pathway name" value="Activation of Matrix Metalloproteinases"/>
</dbReference>
<dbReference type="Reactome" id="R-RNO-2022090">
    <property type="pathway name" value="Assembly of collagen fibrils and other multimeric structures"/>
</dbReference>
<dbReference type="Reactome" id="R-RNO-9009391">
    <property type="pathway name" value="Extra-nuclear estrogen signaling"/>
</dbReference>
<dbReference type="PRO" id="PR:P50280"/>
<dbReference type="Proteomes" id="UP000002494">
    <property type="component" value="Chromosome 8"/>
</dbReference>
<dbReference type="Bgee" id="ENSRNOG00000010507">
    <property type="expression patterns" value="Expressed in ovary and 8 other cell types or tissues"/>
</dbReference>
<dbReference type="GO" id="GO:0009986">
    <property type="term" value="C:cell surface"/>
    <property type="evidence" value="ECO:0000314"/>
    <property type="project" value="RGD"/>
</dbReference>
<dbReference type="GO" id="GO:0031012">
    <property type="term" value="C:extracellular matrix"/>
    <property type="evidence" value="ECO:0007669"/>
    <property type="project" value="InterPro"/>
</dbReference>
<dbReference type="GO" id="GO:0005615">
    <property type="term" value="C:extracellular space"/>
    <property type="evidence" value="ECO:0000314"/>
    <property type="project" value="RGD"/>
</dbReference>
<dbReference type="GO" id="GO:0004175">
    <property type="term" value="F:endopeptidase activity"/>
    <property type="evidence" value="ECO:0000250"/>
    <property type="project" value="UniProtKB"/>
</dbReference>
<dbReference type="GO" id="GO:0008201">
    <property type="term" value="F:heparin binding"/>
    <property type="evidence" value="ECO:0000314"/>
    <property type="project" value="RGD"/>
</dbReference>
<dbReference type="GO" id="GO:0004222">
    <property type="term" value="F:metalloendopeptidase activity"/>
    <property type="evidence" value="ECO:0000318"/>
    <property type="project" value="GO_Central"/>
</dbReference>
<dbReference type="GO" id="GO:0008237">
    <property type="term" value="F:metallopeptidase activity"/>
    <property type="evidence" value="ECO:0000266"/>
    <property type="project" value="RGD"/>
</dbReference>
<dbReference type="GO" id="GO:0008233">
    <property type="term" value="F:peptidase activity"/>
    <property type="evidence" value="ECO:0000266"/>
    <property type="project" value="RGD"/>
</dbReference>
<dbReference type="GO" id="GO:0008270">
    <property type="term" value="F:zinc ion binding"/>
    <property type="evidence" value="ECO:0007669"/>
    <property type="project" value="InterPro"/>
</dbReference>
<dbReference type="GO" id="GO:0002780">
    <property type="term" value="P:antibacterial peptide biosynthetic process"/>
    <property type="evidence" value="ECO:0000266"/>
    <property type="project" value="RGD"/>
</dbReference>
<dbReference type="GO" id="GO:0002779">
    <property type="term" value="P:antibacterial peptide secretion"/>
    <property type="evidence" value="ECO:0000266"/>
    <property type="project" value="RGD"/>
</dbReference>
<dbReference type="GO" id="GO:0071260">
    <property type="term" value="P:cellular response to mechanical stimulus"/>
    <property type="evidence" value="ECO:0000270"/>
    <property type="project" value="RGD"/>
</dbReference>
<dbReference type="GO" id="GO:0030574">
    <property type="term" value="P:collagen catabolic process"/>
    <property type="evidence" value="ECO:0000318"/>
    <property type="project" value="GO_Central"/>
</dbReference>
<dbReference type="GO" id="GO:0042742">
    <property type="term" value="P:defense response to bacterium"/>
    <property type="evidence" value="ECO:0000266"/>
    <property type="project" value="RGD"/>
</dbReference>
<dbReference type="GO" id="GO:0050829">
    <property type="term" value="P:defense response to Gram-negative bacterium"/>
    <property type="evidence" value="ECO:0000266"/>
    <property type="project" value="RGD"/>
</dbReference>
<dbReference type="GO" id="GO:0050830">
    <property type="term" value="P:defense response to Gram-positive bacterium"/>
    <property type="evidence" value="ECO:0000266"/>
    <property type="project" value="RGD"/>
</dbReference>
<dbReference type="GO" id="GO:0044849">
    <property type="term" value="P:estrous cycle"/>
    <property type="evidence" value="ECO:0000270"/>
    <property type="project" value="RGD"/>
</dbReference>
<dbReference type="GO" id="GO:0030198">
    <property type="term" value="P:extracellular matrix organization"/>
    <property type="evidence" value="ECO:0000318"/>
    <property type="project" value="GO_Central"/>
</dbReference>
<dbReference type="GO" id="GO:0060135">
    <property type="term" value="P:maternal process involved in female pregnancy"/>
    <property type="evidence" value="ECO:0000270"/>
    <property type="project" value="RGD"/>
</dbReference>
<dbReference type="GO" id="GO:0006509">
    <property type="term" value="P:membrane protein ectodomain proteolysis"/>
    <property type="evidence" value="ECO:0000266"/>
    <property type="project" value="RGD"/>
</dbReference>
<dbReference type="GO" id="GO:0031293">
    <property type="term" value="P:membrane protein intracellular domain proteolysis"/>
    <property type="evidence" value="ECO:0000266"/>
    <property type="project" value="RGD"/>
</dbReference>
<dbReference type="GO" id="GO:0030335">
    <property type="term" value="P:positive regulation of cell migration"/>
    <property type="evidence" value="ECO:0000266"/>
    <property type="project" value="RGD"/>
</dbReference>
<dbReference type="GO" id="GO:0006508">
    <property type="term" value="P:proteolysis"/>
    <property type="evidence" value="ECO:0000266"/>
    <property type="project" value="RGD"/>
</dbReference>
<dbReference type="GO" id="GO:0042127">
    <property type="term" value="P:regulation of cell population proliferation"/>
    <property type="evidence" value="ECO:0000266"/>
    <property type="project" value="RGD"/>
</dbReference>
<dbReference type="GO" id="GO:0031667">
    <property type="term" value="P:response to nutrient levels"/>
    <property type="evidence" value="ECO:0000270"/>
    <property type="project" value="RGD"/>
</dbReference>
<dbReference type="GO" id="GO:0009410">
    <property type="term" value="P:response to xenobiotic stimulus"/>
    <property type="evidence" value="ECO:0000266"/>
    <property type="project" value="RGD"/>
</dbReference>
<dbReference type="CDD" id="cd04278">
    <property type="entry name" value="ZnMc_MMP"/>
    <property type="match status" value="1"/>
</dbReference>
<dbReference type="FunFam" id="3.40.390.10:FF:000007">
    <property type="entry name" value="Collagenase 3"/>
    <property type="match status" value="1"/>
</dbReference>
<dbReference type="Gene3D" id="3.40.390.10">
    <property type="entry name" value="Collagenase (Catalytic Domain)"/>
    <property type="match status" value="1"/>
</dbReference>
<dbReference type="InterPro" id="IPR033739">
    <property type="entry name" value="M10A_MMP"/>
</dbReference>
<dbReference type="InterPro" id="IPR024079">
    <property type="entry name" value="MetalloPept_cat_dom_sf"/>
</dbReference>
<dbReference type="InterPro" id="IPR001818">
    <property type="entry name" value="Pept_M10_metallopeptidase"/>
</dbReference>
<dbReference type="InterPro" id="IPR021190">
    <property type="entry name" value="Pept_M10A"/>
</dbReference>
<dbReference type="InterPro" id="IPR021158">
    <property type="entry name" value="Pept_M10A_Zn_BS"/>
</dbReference>
<dbReference type="InterPro" id="IPR006026">
    <property type="entry name" value="Peptidase_Metallo"/>
</dbReference>
<dbReference type="InterPro" id="IPR002477">
    <property type="entry name" value="Peptidoglycan-bd-like"/>
</dbReference>
<dbReference type="InterPro" id="IPR036365">
    <property type="entry name" value="PGBD-like_sf"/>
</dbReference>
<dbReference type="PANTHER" id="PTHR10201:SF143">
    <property type="entry name" value="MATRILYSIN"/>
    <property type="match status" value="1"/>
</dbReference>
<dbReference type="PANTHER" id="PTHR10201">
    <property type="entry name" value="MATRIX METALLOPROTEINASE"/>
    <property type="match status" value="1"/>
</dbReference>
<dbReference type="Pfam" id="PF00413">
    <property type="entry name" value="Peptidase_M10"/>
    <property type="match status" value="1"/>
</dbReference>
<dbReference type="Pfam" id="PF01471">
    <property type="entry name" value="PG_binding_1"/>
    <property type="match status" value="1"/>
</dbReference>
<dbReference type="PRINTS" id="PR00138">
    <property type="entry name" value="MATRIXIN"/>
</dbReference>
<dbReference type="SMART" id="SM00235">
    <property type="entry name" value="ZnMc"/>
    <property type="match status" value="1"/>
</dbReference>
<dbReference type="SUPFAM" id="SSF55486">
    <property type="entry name" value="Metalloproteases ('zincins'), catalytic domain"/>
    <property type="match status" value="1"/>
</dbReference>
<dbReference type="SUPFAM" id="SSF47090">
    <property type="entry name" value="PGBD-like"/>
    <property type="match status" value="1"/>
</dbReference>
<dbReference type="PROSITE" id="PS00546">
    <property type="entry name" value="CYSTEINE_SWITCH"/>
    <property type="match status" value="1"/>
</dbReference>
<dbReference type="PROSITE" id="PS00142">
    <property type="entry name" value="ZINC_PROTEASE"/>
    <property type="match status" value="1"/>
</dbReference>
<keyword id="KW-0106">Calcium</keyword>
<keyword id="KW-0177">Collagen degradation</keyword>
<keyword id="KW-0272">Extracellular matrix</keyword>
<keyword id="KW-0378">Hydrolase</keyword>
<keyword id="KW-0479">Metal-binding</keyword>
<keyword id="KW-0482">Metalloprotease</keyword>
<keyword id="KW-0645">Protease</keyword>
<keyword id="KW-1185">Reference proteome</keyword>
<keyword id="KW-0964">Secreted</keyword>
<keyword id="KW-0732">Signal</keyword>
<keyword id="KW-0862">Zinc</keyword>
<keyword id="KW-0865">Zymogen</keyword>
<protein>
    <recommendedName>
        <fullName>Matrilysin</fullName>
        <ecNumber>3.4.24.23</ecNumber>
    </recommendedName>
    <alternativeName>
        <fullName>Matrin</fullName>
    </alternativeName>
    <alternativeName>
        <fullName>Matrix metalloproteinase-7</fullName>
        <shortName>MMP-7</shortName>
    </alternativeName>
    <alternativeName>
        <fullName>Pump-1 protease</fullName>
    </alternativeName>
    <alternativeName>
        <fullName>Uterine metalloproteinase</fullName>
    </alternativeName>
</protein>
<proteinExistence type="evidence at transcript level"/>
<reference key="1">
    <citation type="journal article" date="1995" name="J. Biol. Chem.">
        <title>Characterization of rat uterine matrilysin and its cDNA. Relationship to human pump-1 and activation of procollagenases.</title>
        <authorList>
            <person name="Abramson S.R."/>
            <person name="Conner G.E."/>
            <person name="Nagase H."/>
            <person name="Neuhaus I."/>
            <person name="Woessner J.F."/>
        </authorList>
    </citation>
    <scope>NUCLEOTIDE SEQUENCE [MRNA]</scope>
    <source>
        <strain>Sprague-Dawley</strain>
        <tissue>Uterus</tissue>
    </source>
</reference>
<reference key="2">
    <citation type="journal article" date="2004" name="Genome Res.">
        <title>The status, quality, and expansion of the NIH full-length cDNA project: the Mammalian Gene Collection (MGC).</title>
        <authorList>
            <consortium name="The MGC Project Team"/>
        </authorList>
    </citation>
    <scope>NUCLEOTIDE SEQUENCE [LARGE SCALE MRNA]</scope>
    <source>
        <tissue>Prostate</tissue>
    </source>
</reference>
<name>MMP7_RAT</name>